<name>ULAD_SALNS</name>
<organism>
    <name type="scientific">Salmonella newport (strain SL254)</name>
    <dbReference type="NCBI Taxonomy" id="423368"/>
    <lineage>
        <taxon>Bacteria</taxon>
        <taxon>Pseudomonadati</taxon>
        <taxon>Pseudomonadota</taxon>
        <taxon>Gammaproteobacteria</taxon>
        <taxon>Enterobacterales</taxon>
        <taxon>Enterobacteriaceae</taxon>
        <taxon>Salmonella</taxon>
    </lineage>
</organism>
<sequence length="216" mass="23706">MSLPMLQVALDNQTMDSAYETTRLIAEEVDIIEVGTILCVGEGVRAVRDLKALYPHKIVLADAKIADAGKILSRMCFEANADWVTVICCADINTAKGALDVAKEFNGDVQIELTGYWTWEQAQQWRDAGIQQVVYHRSRDAQAAGVAWGEADITAIKRLSDMGFKVTVTGGLALEDLPLFKGIPIHVFIAGRSIRDAESPVEAARQFKRSIAQLWG</sequence>
<feature type="chain" id="PRO_1000140123" description="3-keto-L-gulonate-6-phosphate decarboxylase UlaD">
    <location>
        <begin position="1"/>
        <end position="216"/>
    </location>
</feature>
<feature type="binding site" evidence="1">
    <location>
        <position position="11"/>
    </location>
    <ligand>
        <name>substrate</name>
    </ligand>
</feature>
<feature type="binding site" evidence="1">
    <location>
        <position position="33"/>
    </location>
    <ligand>
        <name>Mg(2+)</name>
        <dbReference type="ChEBI" id="CHEBI:18420"/>
    </ligand>
</feature>
<feature type="binding site" evidence="1">
    <location>
        <position position="62"/>
    </location>
    <ligand>
        <name>Mg(2+)</name>
        <dbReference type="ChEBI" id="CHEBI:18420"/>
    </ligand>
</feature>
<feature type="binding site" evidence="1">
    <location>
        <position position="192"/>
    </location>
    <ligand>
        <name>substrate</name>
    </ligand>
</feature>
<feature type="site" description="Transition state stabilizer" evidence="1">
    <location>
        <position position="64"/>
    </location>
</feature>
<feature type="site" description="Transition state stabilizer" evidence="1">
    <location>
        <position position="67"/>
    </location>
</feature>
<gene>
    <name evidence="1" type="primary">ulaD</name>
    <name type="ordered locus">SNSL254_A4747</name>
</gene>
<dbReference type="EC" id="4.1.1.85" evidence="1"/>
<dbReference type="EMBL" id="CP001113">
    <property type="protein sequence ID" value="ACF65590.1"/>
    <property type="molecule type" value="Genomic_DNA"/>
</dbReference>
<dbReference type="RefSeq" id="WP_000056761.1">
    <property type="nucleotide sequence ID" value="NZ_CCMR01000003.1"/>
</dbReference>
<dbReference type="SMR" id="B4T3E7"/>
<dbReference type="KEGG" id="see:SNSL254_A4747"/>
<dbReference type="HOGENOM" id="CLU_081825_0_0_6"/>
<dbReference type="UniPathway" id="UPA00263">
    <property type="reaction ID" value="UER00378"/>
</dbReference>
<dbReference type="Proteomes" id="UP000008824">
    <property type="component" value="Chromosome"/>
</dbReference>
<dbReference type="GO" id="GO:0033982">
    <property type="term" value="F:3-dehydro-L-gulonate-6-phosphate decarboxylase activity"/>
    <property type="evidence" value="ECO:0007669"/>
    <property type="project" value="UniProtKB-EC"/>
</dbReference>
<dbReference type="GO" id="GO:0000287">
    <property type="term" value="F:magnesium ion binding"/>
    <property type="evidence" value="ECO:0007669"/>
    <property type="project" value="UniProtKB-UniRule"/>
</dbReference>
<dbReference type="GO" id="GO:0004590">
    <property type="term" value="F:orotidine-5'-phosphate decarboxylase activity"/>
    <property type="evidence" value="ECO:0007669"/>
    <property type="project" value="InterPro"/>
</dbReference>
<dbReference type="GO" id="GO:0006207">
    <property type="term" value="P:'de novo' pyrimidine nucleobase biosynthetic process"/>
    <property type="evidence" value="ECO:0007669"/>
    <property type="project" value="InterPro"/>
</dbReference>
<dbReference type="GO" id="GO:0019854">
    <property type="term" value="P:L-ascorbic acid catabolic process"/>
    <property type="evidence" value="ECO:0007669"/>
    <property type="project" value="UniProtKB-UniRule"/>
</dbReference>
<dbReference type="CDD" id="cd04726">
    <property type="entry name" value="KGPDC_HPS"/>
    <property type="match status" value="1"/>
</dbReference>
<dbReference type="FunFam" id="3.20.20.70:FF:000022">
    <property type="entry name" value="3-keto-L-gulonate-6-phosphate decarboxylase UlaD"/>
    <property type="match status" value="1"/>
</dbReference>
<dbReference type="Gene3D" id="3.20.20.70">
    <property type="entry name" value="Aldolase class I"/>
    <property type="match status" value="1"/>
</dbReference>
<dbReference type="HAMAP" id="MF_01267">
    <property type="entry name" value="UlaD"/>
    <property type="match status" value="1"/>
</dbReference>
<dbReference type="InterPro" id="IPR023942">
    <property type="entry name" value="3-keto-L-gulonate6Pdecase_UlaD"/>
</dbReference>
<dbReference type="InterPro" id="IPR013785">
    <property type="entry name" value="Aldolase_TIM"/>
</dbReference>
<dbReference type="InterPro" id="IPR041710">
    <property type="entry name" value="HPS/KGPDC"/>
</dbReference>
<dbReference type="InterPro" id="IPR001754">
    <property type="entry name" value="OMPdeCOase_dom"/>
</dbReference>
<dbReference type="InterPro" id="IPR011060">
    <property type="entry name" value="RibuloseP-bd_barrel"/>
</dbReference>
<dbReference type="NCBIfam" id="NF009832">
    <property type="entry name" value="PRK13306.1"/>
    <property type="match status" value="1"/>
</dbReference>
<dbReference type="PANTHER" id="PTHR35039">
    <property type="entry name" value="3-KETO-L-GULONATE-6-PHOSPHATE DECARBOXYLASE SGBH-RELATED"/>
    <property type="match status" value="1"/>
</dbReference>
<dbReference type="PANTHER" id="PTHR35039:SF3">
    <property type="entry name" value="3-KETO-L-GULONATE-6-PHOSPHATE DECARBOXYLASE SGBH-RELATED"/>
    <property type="match status" value="1"/>
</dbReference>
<dbReference type="Pfam" id="PF00215">
    <property type="entry name" value="OMPdecase"/>
    <property type="match status" value="1"/>
</dbReference>
<dbReference type="SMART" id="SM00934">
    <property type="entry name" value="OMPdecase"/>
    <property type="match status" value="1"/>
</dbReference>
<dbReference type="SUPFAM" id="SSF51366">
    <property type="entry name" value="Ribulose-phoshate binding barrel"/>
    <property type="match status" value="1"/>
</dbReference>
<accession>B4T3E7</accession>
<keyword id="KW-0119">Carbohydrate metabolism</keyword>
<keyword id="KW-0210">Decarboxylase</keyword>
<keyword id="KW-0456">Lyase</keyword>
<keyword id="KW-0460">Magnesium</keyword>
<keyword id="KW-0479">Metal-binding</keyword>
<evidence type="ECO:0000255" key="1">
    <source>
        <dbReference type="HAMAP-Rule" id="MF_01267"/>
    </source>
</evidence>
<comment type="function">
    <text evidence="1">Catalyzes the decarboxylation of 3-keto-L-gulonate-6-P into L-xylulose-5-P. Is involved in the anaerobic L-ascorbate utilization.</text>
</comment>
<comment type="catalytic activity">
    <reaction evidence="1">
        <text>3-dehydro-L-gulonate 6-phosphate + H(+) = L-xylulose 5-phosphate + CO2</text>
        <dbReference type="Rhea" id="RHEA:14353"/>
        <dbReference type="ChEBI" id="CHEBI:15378"/>
        <dbReference type="ChEBI" id="CHEBI:16526"/>
        <dbReference type="ChEBI" id="CHEBI:57829"/>
        <dbReference type="ChEBI" id="CHEBI:58774"/>
        <dbReference type="EC" id="4.1.1.85"/>
    </reaction>
</comment>
<comment type="cofactor">
    <cofactor evidence="1">
        <name>Mg(2+)</name>
        <dbReference type="ChEBI" id="CHEBI:18420"/>
    </cofactor>
    <text evidence="1">Binds 1 Mg(2+) ion per subunit.</text>
</comment>
<comment type="pathway">
    <text evidence="1">Cofactor degradation; L-ascorbate degradation; D-xylulose 5-phosphate from L-ascorbate: step 2/4.</text>
</comment>
<comment type="subunit">
    <text evidence="1">Homodimer.</text>
</comment>
<comment type="induction">
    <text evidence="1">Induced by L-ascorbate. Repressed by UlaR.</text>
</comment>
<comment type="similarity">
    <text evidence="1">Belongs to the HPS/KGPDC family. KGPDC subfamily.</text>
</comment>
<reference key="1">
    <citation type="journal article" date="2011" name="J. Bacteriol.">
        <title>Comparative genomics of 28 Salmonella enterica isolates: evidence for CRISPR-mediated adaptive sublineage evolution.</title>
        <authorList>
            <person name="Fricke W.F."/>
            <person name="Mammel M.K."/>
            <person name="McDermott P.F."/>
            <person name="Tartera C."/>
            <person name="White D.G."/>
            <person name="Leclerc J.E."/>
            <person name="Ravel J."/>
            <person name="Cebula T.A."/>
        </authorList>
    </citation>
    <scope>NUCLEOTIDE SEQUENCE [LARGE SCALE GENOMIC DNA]</scope>
    <source>
        <strain>SL254</strain>
    </source>
</reference>
<proteinExistence type="inferred from homology"/>
<protein>
    <recommendedName>
        <fullName evidence="1">3-keto-L-gulonate-6-phosphate decarboxylase UlaD</fullName>
        <ecNumber evidence="1">4.1.1.85</ecNumber>
    </recommendedName>
    <alternativeName>
        <fullName evidence="1">3-dehydro-L-gulonate-6-phosphate decarboxylase</fullName>
    </alternativeName>
    <alternativeName>
        <fullName evidence="1">KGPDC</fullName>
    </alternativeName>
    <alternativeName>
        <fullName evidence="1">L-ascorbate utilization protein D</fullName>
    </alternativeName>
</protein>